<reference key="1">
    <citation type="journal article" date="2004" name="Nucleic Acids Res.">
        <title>Genome sequence of Symbiobacterium thermophilum, an uncultivable bacterium that depends on microbial commensalism.</title>
        <authorList>
            <person name="Ueda K."/>
            <person name="Yamashita A."/>
            <person name="Ishikawa J."/>
            <person name="Shimada M."/>
            <person name="Watsuji T."/>
            <person name="Morimura K."/>
            <person name="Ikeda H."/>
            <person name="Hattori M."/>
            <person name="Beppu T."/>
        </authorList>
    </citation>
    <scope>NUCLEOTIDE SEQUENCE [LARGE SCALE GENOMIC DNA]</scope>
    <source>
        <strain>DSM 24528 / JCM 14929 / IAM 14863 / T</strain>
    </source>
</reference>
<comment type="function">
    <text evidence="1">NDH-1 shuttles electrons from NADH, via FMN and iron-sulfur (Fe-S) centers, to quinones in the respiratory chain. The immediate electron acceptor for the enzyme in this species is believed to be ubiquinone. Couples the redox reaction to proton translocation (for every two electrons transferred, four hydrogen ions are translocated across the cytoplasmic membrane), and thus conserves the redox energy in a proton gradient.</text>
</comment>
<comment type="catalytic activity">
    <reaction evidence="1">
        <text>a quinone + NADH + 5 H(+)(in) = a quinol + NAD(+) + 4 H(+)(out)</text>
        <dbReference type="Rhea" id="RHEA:57888"/>
        <dbReference type="ChEBI" id="CHEBI:15378"/>
        <dbReference type="ChEBI" id="CHEBI:24646"/>
        <dbReference type="ChEBI" id="CHEBI:57540"/>
        <dbReference type="ChEBI" id="CHEBI:57945"/>
        <dbReference type="ChEBI" id="CHEBI:132124"/>
    </reaction>
</comment>
<comment type="cofactor">
    <cofactor evidence="1">
        <name>[4Fe-4S] cluster</name>
        <dbReference type="ChEBI" id="CHEBI:49883"/>
    </cofactor>
    <text evidence="1">Binds 2 [4Fe-4S] clusters per subunit.</text>
</comment>
<comment type="subunit">
    <text evidence="1">NDH-1 is composed of 14 different subunits. Subunits NuoA, H, J, K, L, M, N constitute the membrane sector of the complex.</text>
</comment>
<comment type="subcellular location">
    <subcellularLocation>
        <location evidence="1">Cell membrane</location>
        <topology evidence="1">Peripheral membrane protein</topology>
    </subcellularLocation>
</comment>
<comment type="similarity">
    <text evidence="1">Belongs to the complex I 23 kDa subunit family.</text>
</comment>
<keyword id="KW-0004">4Fe-4S</keyword>
<keyword id="KW-1003">Cell membrane</keyword>
<keyword id="KW-0408">Iron</keyword>
<keyword id="KW-0411">Iron-sulfur</keyword>
<keyword id="KW-0472">Membrane</keyword>
<keyword id="KW-0479">Metal-binding</keyword>
<keyword id="KW-0520">NAD</keyword>
<keyword id="KW-0874">Quinone</keyword>
<keyword id="KW-1185">Reference proteome</keyword>
<keyword id="KW-0677">Repeat</keyword>
<keyword id="KW-1278">Translocase</keyword>
<keyword id="KW-0830">Ubiquinone</keyword>
<gene>
    <name evidence="1" type="primary">nuoI2</name>
    <name type="ordered locus">STH2772</name>
</gene>
<accession>Q67KP1</accession>
<organism>
    <name type="scientific">Symbiobacterium thermophilum (strain DSM 24528 / JCM 14929 / IAM 14863 / T)</name>
    <dbReference type="NCBI Taxonomy" id="292459"/>
    <lineage>
        <taxon>Bacteria</taxon>
        <taxon>Bacillati</taxon>
        <taxon>Bacillota</taxon>
        <taxon>Clostridia</taxon>
        <taxon>Eubacteriales</taxon>
        <taxon>Symbiobacteriaceae</taxon>
        <taxon>Symbiobacterium</taxon>
    </lineage>
</organism>
<protein>
    <recommendedName>
        <fullName evidence="1">NADH-quinone oxidoreductase subunit I 2</fullName>
        <ecNumber evidence="1">7.1.1.-</ecNumber>
    </recommendedName>
    <alternativeName>
        <fullName evidence="1">NADH dehydrogenase I subunit I 2</fullName>
    </alternativeName>
    <alternativeName>
        <fullName evidence="1">NDH-1 subunit I 2</fullName>
    </alternativeName>
</protein>
<sequence length="240" mass="26924">MGVTNFFGEAWRTGKSIVTGLGITFREMMFRPAITVFYPEQRDDVPPWFRGIPVLKTDLRTGEYKCTSCMQCAQACPVNVITIEWHQDPETKKKVCDRFAIDMSRCMLCNFCVEACPFDSLVMGYDYELCKVNPENLVFEFEDLLRLGLKYSKAEEPGPKATRSSTPPWVFHGLTNATEDDIQDIHGYLGRPPLPKGYEPELKPQFRKPAEEAAEAQQAEAAGQPAAEPGKTNGEEAGQP</sequence>
<evidence type="ECO:0000255" key="1">
    <source>
        <dbReference type="HAMAP-Rule" id="MF_01351"/>
    </source>
</evidence>
<evidence type="ECO:0000256" key="2">
    <source>
        <dbReference type="SAM" id="MobiDB-lite"/>
    </source>
</evidence>
<feature type="chain" id="PRO_0000245753" description="NADH-quinone oxidoreductase subunit I 2">
    <location>
        <begin position="1"/>
        <end position="240"/>
    </location>
</feature>
<feature type="domain" description="4Fe-4S ferredoxin-type 1" evidence="1">
    <location>
        <begin position="57"/>
        <end position="86"/>
    </location>
</feature>
<feature type="domain" description="4Fe-4S ferredoxin-type 2" evidence="1">
    <location>
        <begin position="97"/>
        <end position="126"/>
    </location>
</feature>
<feature type="region of interest" description="Disordered" evidence="2">
    <location>
        <begin position="185"/>
        <end position="240"/>
    </location>
</feature>
<feature type="compositionally biased region" description="Basic and acidic residues" evidence="2">
    <location>
        <begin position="198"/>
        <end position="211"/>
    </location>
</feature>
<feature type="compositionally biased region" description="Low complexity" evidence="2">
    <location>
        <begin position="215"/>
        <end position="230"/>
    </location>
</feature>
<feature type="binding site" evidence="1">
    <location>
        <position position="66"/>
    </location>
    <ligand>
        <name>[4Fe-4S] cluster</name>
        <dbReference type="ChEBI" id="CHEBI:49883"/>
        <label>1</label>
    </ligand>
</feature>
<feature type="binding site" evidence="1">
    <location>
        <position position="69"/>
    </location>
    <ligand>
        <name>[4Fe-4S] cluster</name>
        <dbReference type="ChEBI" id="CHEBI:49883"/>
        <label>1</label>
    </ligand>
</feature>
<feature type="binding site" evidence="1">
    <location>
        <position position="72"/>
    </location>
    <ligand>
        <name>[4Fe-4S] cluster</name>
        <dbReference type="ChEBI" id="CHEBI:49883"/>
        <label>1</label>
    </ligand>
</feature>
<feature type="binding site" evidence="1">
    <location>
        <position position="76"/>
    </location>
    <ligand>
        <name>[4Fe-4S] cluster</name>
        <dbReference type="ChEBI" id="CHEBI:49883"/>
        <label>2</label>
    </ligand>
</feature>
<feature type="binding site" evidence="1">
    <location>
        <position position="106"/>
    </location>
    <ligand>
        <name>[4Fe-4S] cluster</name>
        <dbReference type="ChEBI" id="CHEBI:49883"/>
        <label>2</label>
    </ligand>
</feature>
<feature type="binding site" evidence="1">
    <location>
        <position position="109"/>
    </location>
    <ligand>
        <name>[4Fe-4S] cluster</name>
        <dbReference type="ChEBI" id="CHEBI:49883"/>
        <label>2</label>
    </ligand>
</feature>
<feature type="binding site" evidence="1">
    <location>
        <position position="112"/>
    </location>
    <ligand>
        <name>[4Fe-4S] cluster</name>
        <dbReference type="ChEBI" id="CHEBI:49883"/>
        <label>2</label>
    </ligand>
</feature>
<feature type="binding site" evidence="1">
    <location>
        <position position="116"/>
    </location>
    <ligand>
        <name>[4Fe-4S] cluster</name>
        <dbReference type="ChEBI" id="CHEBI:49883"/>
        <label>1</label>
    </ligand>
</feature>
<name>NUOI2_SYMTH</name>
<proteinExistence type="inferred from homology"/>
<dbReference type="EC" id="7.1.1.-" evidence="1"/>
<dbReference type="EMBL" id="AP006840">
    <property type="protein sequence ID" value="BAD41757.1"/>
    <property type="molecule type" value="Genomic_DNA"/>
</dbReference>
<dbReference type="RefSeq" id="WP_011196891.1">
    <property type="nucleotide sequence ID" value="NC_006177.1"/>
</dbReference>
<dbReference type="STRING" id="292459.STH2772"/>
<dbReference type="KEGG" id="sth:STH2772"/>
<dbReference type="eggNOG" id="COG1143">
    <property type="taxonomic scope" value="Bacteria"/>
</dbReference>
<dbReference type="HOGENOM" id="CLU_1155919_0_0_9"/>
<dbReference type="OrthoDB" id="9803192at2"/>
<dbReference type="Proteomes" id="UP000000417">
    <property type="component" value="Chromosome"/>
</dbReference>
<dbReference type="GO" id="GO:0005886">
    <property type="term" value="C:plasma membrane"/>
    <property type="evidence" value="ECO:0007669"/>
    <property type="project" value="UniProtKB-SubCell"/>
</dbReference>
<dbReference type="GO" id="GO:0051539">
    <property type="term" value="F:4 iron, 4 sulfur cluster binding"/>
    <property type="evidence" value="ECO:0007669"/>
    <property type="project" value="UniProtKB-KW"/>
</dbReference>
<dbReference type="GO" id="GO:0005506">
    <property type="term" value="F:iron ion binding"/>
    <property type="evidence" value="ECO:0007669"/>
    <property type="project" value="UniProtKB-UniRule"/>
</dbReference>
<dbReference type="GO" id="GO:0050136">
    <property type="term" value="F:NADH:ubiquinone reductase (non-electrogenic) activity"/>
    <property type="evidence" value="ECO:0007669"/>
    <property type="project" value="UniProtKB-UniRule"/>
</dbReference>
<dbReference type="GO" id="GO:0048038">
    <property type="term" value="F:quinone binding"/>
    <property type="evidence" value="ECO:0007669"/>
    <property type="project" value="UniProtKB-KW"/>
</dbReference>
<dbReference type="Gene3D" id="3.30.70.3270">
    <property type="match status" value="1"/>
</dbReference>
<dbReference type="HAMAP" id="MF_01351">
    <property type="entry name" value="NDH1_NuoI"/>
    <property type="match status" value="1"/>
</dbReference>
<dbReference type="InterPro" id="IPR017896">
    <property type="entry name" value="4Fe4S_Fe-S-bd"/>
</dbReference>
<dbReference type="InterPro" id="IPR017900">
    <property type="entry name" value="4Fe4S_Fe_S_CS"/>
</dbReference>
<dbReference type="InterPro" id="IPR010226">
    <property type="entry name" value="NADH_quinone_OxRdtase_chainI"/>
</dbReference>
<dbReference type="PANTHER" id="PTHR10849">
    <property type="entry name" value="NADH DEHYDROGENASE UBIQUINONE IRON-SULFUR PROTEIN 8, MITOCHONDRIAL"/>
    <property type="match status" value="1"/>
</dbReference>
<dbReference type="PANTHER" id="PTHR10849:SF24">
    <property type="entry name" value="NADH-QUINONE OXIDOREDUCTASE SUBUNIT I 2"/>
    <property type="match status" value="1"/>
</dbReference>
<dbReference type="Pfam" id="PF12838">
    <property type="entry name" value="Fer4_7"/>
    <property type="match status" value="1"/>
</dbReference>
<dbReference type="SUPFAM" id="SSF54862">
    <property type="entry name" value="4Fe-4S ferredoxins"/>
    <property type="match status" value="1"/>
</dbReference>
<dbReference type="PROSITE" id="PS00198">
    <property type="entry name" value="4FE4S_FER_1"/>
    <property type="match status" value="2"/>
</dbReference>
<dbReference type="PROSITE" id="PS51379">
    <property type="entry name" value="4FE4S_FER_2"/>
    <property type="match status" value="2"/>
</dbReference>